<sequence length="85" mass="9164">MAHKKAGGSTRNGRDSESKRLGVKRFGGQVVIPGNILVRQRGTQFHPGVGVQIGKDHTLFAVVEGQVKFEVKGKLKRRTVSVVAA</sequence>
<comment type="similarity">
    <text evidence="1">Belongs to the bacterial ribosomal protein bL27 family.</text>
</comment>
<accession>A6W353</accession>
<organism>
    <name type="scientific">Marinomonas sp. (strain MWYL1)</name>
    <dbReference type="NCBI Taxonomy" id="400668"/>
    <lineage>
        <taxon>Bacteria</taxon>
        <taxon>Pseudomonadati</taxon>
        <taxon>Pseudomonadota</taxon>
        <taxon>Gammaproteobacteria</taxon>
        <taxon>Oceanospirillales</taxon>
        <taxon>Oceanospirillaceae</taxon>
        <taxon>Marinomonas</taxon>
    </lineage>
</organism>
<gene>
    <name evidence="1" type="primary">rpmA</name>
    <name type="ordered locus">Mmwyl1_4237</name>
</gene>
<name>RL27_MARMS</name>
<feature type="chain" id="PRO_1000081895" description="Large ribosomal subunit protein bL27">
    <location>
        <begin position="1"/>
        <end position="85"/>
    </location>
</feature>
<feature type="region of interest" description="Disordered" evidence="2">
    <location>
        <begin position="1"/>
        <end position="22"/>
    </location>
</feature>
<proteinExistence type="inferred from homology"/>
<dbReference type="EMBL" id="CP000749">
    <property type="protein sequence ID" value="ABR73132.1"/>
    <property type="molecule type" value="Genomic_DNA"/>
</dbReference>
<dbReference type="SMR" id="A6W353"/>
<dbReference type="STRING" id="400668.Mmwyl1_4237"/>
<dbReference type="KEGG" id="mmw:Mmwyl1_4237"/>
<dbReference type="eggNOG" id="COG0211">
    <property type="taxonomic scope" value="Bacteria"/>
</dbReference>
<dbReference type="HOGENOM" id="CLU_095424_4_1_6"/>
<dbReference type="OrthoDB" id="9803474at2"/>
<dbReference type="GO" id="GO:0022625">
    <property type="term" value="C:cytosolic large ribosomal subunit"/>
    <property type="evidence" value="ECO:0007669"/>
    <property type="project" value="TreeGrafter"/>
</dbReference>
<dbReference type="GO" id="GO:0003735">
    <property type="term" value="F:structural constituent of ribosome"/>
    <property type="evidence" value="ECO:0007669"/>
    <property type="project" value="InterPro"/>
</dbReference>
<dbReference type="GO" id="GO:0006412">
    <property type="term" value="P:translation"/>
    <property type="evidence" value="ECO:0007669"/>
    <property type="project" value="UniProtKB-UniRule"/>
</dbReference>
<dbReference type="FunFam" id="2.40.50.100:FF:000001">
    <property type="entry name" value="50S ribosomal protein L27"/>
    <property type="match status" value="1"/>
</dbReference>
<dbReference type="Gene3D" id="2.40.50.100">
    <property type="match status" value="1"/>
</dbReference>
<dbReference type="HAMAP" id="MF_00539">
    <property type="entry name" value="Ribosomal_bL27"/>
    <property type="match status" value="1"/>
</dbReference>
<dbReference type="InterPro" id="IPR001684">
    <property type="entry name" value="Ribosomal_bL27"/>
</dbReference>
<dbReference type="InterPro" id="IPR018261">
    <property type="entry name" value="Ribosomal_bL27_CS"/>
</dbReference>
<dbReference type="NCBIfam" id="TIGR00062">
    <property type="entry name" value="L27"/>
    <property type="match status" value="1"/>
</dbReference>
<dbReference type="PANTHER" id="PTHR15893:SF0">
    <property type="entry name" value="LARGE RIBOSOMAL SUBUNIT PROTEIN BL27M"/>
    <property type="match status" value="1"/>
</dbReference>
<dbReference type="PANTHER" id="PTHR15893">
    <property type="entry name" value="RIBOSOMAL PROTEIN L27"/>
    <property type="match status" value="1"/>
</dbReference>
<dbReference type="Pfam" id="PF01016">
    <property type="entry name" value="Ribosomal_L27"/>
    <property type="match status" value="1"/>
</dbReference>
<dbReference type="PRINTS" id="PR00063">
    <property type="entry name" value="RIBOSOMALL27"/>
</dbReference>
<dbReference type="SUPFAM" id="SSF110324">
    <property type="entry name" value="Ribosomal L27 protein-like"/>
    <property type="match status" value="1"/>
</dbReference>
<dbReference type="PROSITE" id="PS00831">
    <property type="entry name" value="RIBOSOMAL_L27"/>
    <property type="match status" value="1"/>
</dbReference>
<evidence type="ECO:0000255" key="1">
    <source>
        <dbReference type="HAMAP-Rule" id="MF_00539"/>
    </source>
</evidence>
<evidence type="ECO:0000256" key="2">
    <source>
        <dbReference type="SAM" id="MobiDB-lite"/>
    </source>
</evidence>
<evidence type="ECO:0000305" key="3"/>
<protein>
    <recommendedName>
        <fullName evidence="1">Large ribosomal subunit protein bL27</fullName>
    </recommendedName>
    <alternativeName>
        <fullName evidence="3">50S ribosomal protein L27</fullName>
    </alternativeName>
</protein>
<reference key="1">
    <citation type="submission" date="2007-06" db="EMBL/GenBank/DDBJ databases">
        <title>Complete sequence of Marinomonas sp. MWYL1.</title>
        <authorList>
            <consortium name="US DOE Joint Genome Institute"/>
            <person name="Copeland A."/>
            <person name="Lucas S."/>
            <person name="Lapidus A."/>
            <person name="Barry K."/>
            <person name="Glavina del Rio T."/>
            <person name="Dalin E."/>
            <person name="Tice H."/>
            <person name="Pitluck S."/>
            <person name="Kiss H."/>
            <person name="Brettin T."/>
            <person name="Bruce D."/>
            <person name="Detter J.C."/>
            <person name="Han C."/>
            <person name="Schmutz J."/>
            <person name="Larimer F."/>
            <person name="Land M."/>
            <person name="Hauser L."/>
            <person name="Kyrpides N."/>
            <person name="Kim E."/>
            <person name="Johnston A.W.B."/>
            <person name="Todd J.D."/>
            <person name="Rogers R."/>
            <person name="Wexler M."/>
            <person name="Bond P.L."/>
            <person name="Li Y."/>
            <person name="Richardson P."/>
        </authorList>
    </citation>
    <scope>NUCLEOTIDE SEQUENCE [LARGE SCALE GENOMIC DNA]</scope>
    <source>
        <strain>MWYL1</strain>
    </source>
</reference>
<keyword id="KW-0687">Ribonucleoprotein</keyword>
<keyword id="KW-0689">Ribosomal protein</keyword>